<sequence>MISWHDLYTVLTAVIPLYVAMILAYGSVRWWKIFSPDQCSGINRFVAIFAVPLLSFHFISTNNPYAMNLRFIAADTLQKIIMLSLLVLWANFTRSGSLEWSITIFSLSTLPNTLVMGIPLLIAMYGEYSGSLMVQIVVLQCIIWYTLLLFLFEFRGAKMLIMEQFPETAASIVSFKVESDVVSLDGHDFLETDAEIGDDGKLHVTVRKSNASRRSFCGPNMTPRPSNLTGAEIYSLSTTPRGSNFNHSDFYNMMGFPGGRLSNFGPADMYSVQSSRGPTPRPSNFEENCAMASSPRFGYYPGGGAGSYPAPNPEFSSTTTSTANKSVNKNPKDVNTNQQTTLPTGGKSNSHDAKELHMFVWSSNGSPVSDRAGLNVFGGAPDNDQGGRSDQGAKEIRMLVPDQSHNGETKAVAHPASGDFGGEQQFSFAGKEEEAERPKDAENGLNKLAPNSTAALQSKTGLGGAEASQRKNMPPASVMTRLILIMVWRKLIRNPNTYSSLIGLIWALVAFRWHVAMPKIIQQSISILSDAGLGMAMFSLGLFMALQPKLIACGNSVATFAMAVRFLTGPAVMAVAAIAIGLRGDLLRVAIVQAALPQGIVPFVFAKEYNVHPAILSTGVIFGMLIALPITLVYYILLGL</sequence>
<evidence type="ECO:0000250" key="1">
    <source>
        <dbReference type="UniProtKB" id="Q9C6B8"/>
    </source>
</evidence>
<evidence type="ECO:0000255" key="2"/>
<evidence type="ECO:0000256" key="3">
    <source>
        <dbReference type="SAM" id="MobiDB-lite"/>
    </source>
</evidence>
<evidence type="ECO:0000269" key="4">
    <source>
    </source>
</evidence>
<evidence type="ECO:0000269" key="5">
    <source>
    </source>
</evidence>
<evidence type="ECO:0000269" key="6">
    <source>
    </source>
</evidence>
<evidence type="ECO:0000269" key="7">
    <source>
    </source>
</evidence>
<evidence type="ECO:0000269" key="8">
    <source>
    </source>
</evidence>
<evidence type="ECO:0000269" key="9">
    <source>
    </source>
</evidence>
<evidence type="ECO:0000303" key="10">
    <source>
    </source>
</evidence>
<evidence type="ECO:0000305" key="11"/>
<evidence type="ECO:0000312" key="12">
    <source>
        <dbReference type="Araport" id="AT1G70940"/>
    </source>
</evidence>
<evidence type="ECO:0000312" key="13">
    <source>
        <dbReference type="EMBL" id="AAD55507.1"/>
    </source>
</evidence>
<evidence type="ECO:0007744" key="14">
    <source>
        <dbReference type="PDB" id="7WKS"/>
    </source>
</evidence>
<evidence type="ECO:0007744" key="15">
    <source>
        <dbReference type="PDB" id="7WKW"/>
    </source>
</evidence>
<evidence type="ECO:0007744" key="16">
    <source>
        <dbReference type="PDB" id="7XXB"/>
    </source>
</evidence>
<evidence type="ECO:0007744" key="17">
    <source>
    </source>
</evidence>
<evidence type="ECO:0007829" key="18">
    <source>
        <dbReference type="PDB" id="7WKS"/>
    </source>
</evidence>
<evidence type="ECO:0007829" key="19">
    <source>
        <dbReference type="PDB" id="7WKW"/>
    </source>
</evidence>
<evidence type="ECO:0007829" key="20">
    <source>
        <dbReference type="PDB" id="7XXB"/>
    </source>
</evidence>
<gene>
    <name evidence="10" type="primary">PIN3</name>
    <name evidence="12" type="ordered locus">At1g70940</name>
    <name evidence="13" type="ORF">F15H11.14</name>
</gene>
<keyword id="KW-0002">3D-structure</keyword>
<keyword id="KW-0927">Auxin signaling pathway</keyword>
<keyword id="KW-1003">Cell membrane</keyword>
<keyword id="KW-0472">Membrane</keyword>
<keyword id="KW-0597">Phosphoprotein</keyword>
<keyword id="KW-1185">Reference proteome</keyword>
<keyword id="KW-0812">Transmembrane</keyword>
<keyword id="KW-1133">Transmembrane helix</keyword>
<keyword id="KW-0813">Transport</keyword>
<dbReference type="EMBL" id="AF087818">
    <property type="protein sequence ID" value="AAD52695.1"/>
    <property type="molecule type" value="mRNA"/>
</dbReference>
<dbReference type="EMBL" id="AC008148">
    <property type="protein sequence ID" value="AAD55507.1"/>
    <property type="molecule type" value="Genomic_DNA"/>
</dbReference>
<dbReference type="EMBL" id="CP002684">
    <property type="protein sequence ID" value="AEE35140.1"/>
    <property type="molecule type" value="Genomic_DNA"/>
</dbReference>
<dbReference type="EMBL" id="AY136327">
    <property type="protein sequence ID" value="AAM96993.1"/>
    <property type="molecule type" value="mRNA"/>
</dbReference>
<dbReference type="EMBL" id="BT002085">
    <property type="protein sequence ID" value="AAN72096.1"/>
    <property type="molecule type" value="mRNA"/>
</dbReference>
<dbReference type="PIR" id="G96733">
    <property type="entry name" value="G96733"/>
</dbReference>
<dbReference type="RefSeq" id="NP_177250.1">
    <property type="nucleotide sequence ID" value="NM_105762.3"/>
</dbReference>
<dbReference type="PDB" id="7WKS">
    <property type="method" value="EM"/>
    <property type="resolution" value="3.00 A"/>
    <property type="chains" value="A/B=1-640"/>
</dbReference>
<dbReference type="PDB" id="7WKW">
    <property type="method" value="EM"/>
    <property type="resolution" value="2.62 A"/>
    <property type="chains" value="A/B=1-640"/>
</dbReference>
<dbReference type="PDB" id="7XXB">
    <property type="method" value="EM"/>
    <property type="resolution" value="2.93 A"/>
    <property type="chains" value="A/B=1-640"/>
</dbReference>
<dbReference type="PDBsum" id="7WKS"/>
<dbReference type="PDBsum" id="7WKW"/>
<dbReference type="PDBsum" id="7XXB"/>
<dbReference type="EMDB" id="EMD-32568"/>
<dbReference type="EMDB" id="EMD-32570"/>
<dbReference type="EMDB" id="EMD-33500"/>
<dbReference type="SMR" id="Q9S7Z8"/>
<dbReference type="BioGRID" id="28652">
    <property type="interactions" value="9"/>
</dbReference>
<dbReference type="FunCoup" id="Q9S7Z8">
    <property type="interactions" value="1"/>
</dbReference>
<dbReference type="IntAct" id="Q9S7Z8">
    <property type="interactions" value="2"/>
</dbReference>
<dbReference type="STRING" id="3702.Q9S7Z8"/>
<dbReference type="TCDB" id="2.A.69.1.4">
    <property type="family name" value="the auxin efflux carrier (aec) family"/>
</dbReference>
<dbReference type="GlyCosmos" id="Q9S7Z8">
    <property type="glycosylation" value="2 sites, No reported glycans"/>
</dbReference>
<dbReference type="GlyGen" id="Q9S7Z8">
    <property type="glycosylation" value="1 site"/>
</dbReference>
<dbReference type="iPTMnet" id="Q9S7Z8"/>
<dbReference type="PaxDb" id="3702-AT1G70940.1"/>
<dbReference type="ProteomicsDB" id="235029"/>
<dbReference type="EnsemblPlants" id="AT1G70940.1">
    <property type="protein sequence ID" value="AT1G70940.1"/>
    <property type="gene ID" value="AT1G70940"/>
</dbReference>
<dbReference type="GeneID" id="843432"/>
<dbReference type="Gramene" id="AT1G70940.1">
    <property type="protein sequence ID" value="AT1G70940.1"/>
    <property type="gene ID" value="AT1G70940"/>
</dbReference>
<dbReference type="KEGG" id="ath:AT1G70940"/>
<dbReference type="Araport" id="AT1G70940"/>
<dbReference type="TAIR" id="AT1G70940">
    <property type="gene designation" value="PIN3"/>
</dbReference>
<dbReference type="eggNOG" id="ENOG502QRM7">
    <property type="taxonomic scope" value="Eukaryota"/>
</dbReference>
<dbReference type="HOGENOM" id="CLU_019285_1_1_1"/>
<dbReference type="InParanoid" id="Q9S7Z8"/>
<dbReference type="OMA" id="SDFYNMM"/>
<dbReference type="PhylomeDB" id="Q9S7Z8"/>
<dbReference type="PRO" id="PR:Q9S7Z8"/>
<dbReference type="Proteomes" id="UP000006548">
    <property type="component" value="Chromosome 1"/>
</dbReference>
<dbReference type="ExpressionAtlas" id="Q9S7Z8">
    <property type="expression patterns" value="baseline and differential"/>
</dbReference>
<dbReference type="GO" id="GO:0009986">
    <property type="term" value="C:cell surface"/>
    <property type="evidence" value="ECO:0000314"/>
    <property type="project" value="TAIR"/>
</dbReference>
<dbReference type="GO" id="GO:0016328">
    <property type="term" value="C:lateral plasma membrane"/>
    <property type="evidence" value="ECO:0000314"/>
    <property type="project" value="TAIR"/>
</dbReference>
<dbReference type="GO" id="GO:0005739">
    <property type="term" value="C:mitochondrion"/>
    <property type="evidence" value="ECO:0007005"/>
    <property type="project" value="TAIR"/>
</dbReference>
<dbReference type="GO" id="GO:0005886">
    <property type="term" value="C:plasma membrane"/>
    <property type="evidence" value="ECO:0000314"/>
    <property type="project" value="TAIR"/>
</dbReference>
<dbReference type="GO" id="GO:0012506">
    <property type="term" value="C:vesicle membrane"/>
    <property type="evidence" value="ECO:0000314"/>
    <property type="project" value="TAIR"/>
</dbReference>
<dbReference type="GO" id="GO:0010329">
    <property type="term" value="F:auxin efflux transmembrane transporter activity"/>
    <property type="evidence" value="ECO:0000314"/>
    <property type="project" value="UniProtKB"/>
</dbReference>
<dbReference type="GO" id="GO:0042802">
    <property type="term" value="F:identical protein binding"/>
    <property type="evidence" value="ECO:0000314"/>
    <property type="project" value="UniProtKB"/>
</dbReference>
<dbReference type="GO" id="GO:0042803">
    <property type="term" value="F:protein homodimerization activity"/>
    <property type="evidence" value="ECO:0000314"/>
    <property type="project" value="UniProtKB"/>
</dbReference>
<dbReference type="GO" id="GO:0010315">
    <property type="term" value="P:auxin export across the plasma membrane"/>
    <property type="evidence" value="ECO:0000314"/>
    <property type="project" value="UniProtKB"/>
</dbReference>
<dbReference type="GO" id="GO:0009926">
    <property type="term" value="P:auxin polar transport"/>
    <property type="evidence" value="ECO:0000315"/>
    <property type="project" value="TAIR"/>
</dbReference>
<dbReference type="GO" id="GO:0009734">
    <property type="term" value="P:auxin-activated signaling pathway"/>
    <property type="evidence" value="ECO:0007669"/>
    <property type="project" value="UniProtKB-KW"/>
</dbReference>
<dbReference type="GO" id="GO:0009630">
    <property type="term" value="P:gravitropism"/>
    <property type="evidence" value="ECO:0000304"/>
    <property type="project" value="TAIR"/>
</dbReference>
<dbReference type="GO" id="GO:0009958">
    <property type="term" value="P:positive gravitropism"/>
    <property type="evidence" value="ECO:0000315"/>
    <property type="project" value="TAIR"/>
</dbReference>
<dbReference type="GO" id="GO:0009416">
    <property type="term" value="P:response to light stimulus"/>
    <property type="evidence" value="ECO:0000314"/>
    <property type="project" value="TAIR"/>
</dbReference>
<dbReference type="GO" id="GO:0048364">
    <property type="term" value="P:root development"/>
    <property type="evidence" value="ECO:0000315"/>
    <property type="project" value="TAIR"/>
</dbReference>
<dbReference type="GO" id="GO:0048767">
    <property type="term" value="P:root hair elongation"/>
    <property type="evidence" value="ECO:0000315"/>
    <property type="project" value="TAIR"/>
</dbReference>
<dbReference type="GO" id="GO:0048766">
    <property type="term" value="P:root hair initiation"/>
    <property type="evidence" value="ECO:0000315"/>
    <property type="project" value="TAIR"/>
</dbReference>
<dbReference type="GO" id="GO:0009606">
    <property type="term" value="P:tropism"/>
    <property type="evidence" value="ECO:0000315"/>
    <property type="project" value="TAIR"/>
</dbReference>
<dbReference type="InterPro" id="IPR014024">
    <property type="entry name" value="Auxin_eff_plant"/>
</dbReference>
<dbReference type="InterPro" id="IPR051107">
    <property type="entry name" value="Auxin_Efflux_Carrier"/>
</dbReference>
<dbReference type="InterPro" id="IPR004776">
    <property type="entry name" value="Mem_transp_PIN-like"/>
</dbReference>
<dbReference type="NCBIfam" id="TIGR00946">
    <property type="entry name" value="2a69"/>
    <property type="match status" value="1"/>
</dbReference>
<dbReference type="PANTHER" id="PTHR31752">
    <property type="entry name" value="AUXIN EFFLUX CARRIER COMPONENT 1B-RELATED"/>
    <property type="match status" value="1"/>
</dbReference>
<dbReference type="PANTHER" id="PTHR31752:SF60">
    <property type="entry name" value="AUXIN EFFLUX CARRIER COMPONENT 3"/>
    <property type="match status" value="1"/>
</dbReference>
<dbReference type="Pfam" id="PF03547">
    <property type="entry name" value="Mem_trans"/>
    <property type="match status" value="1"/>
</dbReference>
<accession>Q9S7Z8</accession>
<comment type="function">
    <text evidence="6 8 9">Acts as a component of the auxin efflux carrier; this activity is enhanced when activated by PID-mediated phosphorylation (PubMed:20439545, PubMed:35917926). Seems to be involved in the lateral auxin transport system (PubMed:20439545). Together with PIN4 and PIN7, involved in the connective auxin transport (CAT) that ensures communication across the shoot system, and modulates strigolactone-mediated shoot branching control (PubMed:30865619). Binds auxins including indole-3-acetic acid (IAA) (PubMed:35917926). Coordinated polar localization of PIN3 is directly regulated by the vesicle trafficking process (PubMed:20439545).</text>
</comment>
<comment type="activity regulation">
    <text evidence="9">Auxin efflux carrier activity is competitively inhibited by naptalamate (N-1-naphthylphthalamic acid, NPA).</text>
</comment>
<comment type="subunit">
    <text evidence="9">Homodimer.</text>
</comment>
<comment type="subcellular location">
    <subcellularLocation>
        <location evidence="6">Cell membrane</location>
        <topology evidence="11">Multi-pass membrane protein</topology>
    </subcellularLocation>
</comment>
<comment type="tissue specificity">
    <text>Predominantly expressed at the lateral side of shoot endodermis cells as well as root pericycle and columella cells.</text>
</comment>
<comment type="developmental stage">
    <text evidence="5">Expressed during embryogenesis. Detected in the precursors of the columella root cells.</text>
</comment>
<comment type="induction">
    <text evidence="7">Down-regulated by endoplasmic reticulum stress treatment.</text>
</comment>
<comment type="disruption phenotype">
    <text evidence="4 8">Plants display defects in hypocotyl differential growth (PubMed:11845211). The triple mutant pin3 pin4 pin7 is able to suppress partially the highly branched phenotype of strigolactone deficient mutants lacking MAX2 and MAX4 (PubMed:30865619). The abcb19 pin3 pin4 pin7 quadruple mutant exhibits an additive phenotype on strigolactone-mediated bud outgrowth responses and shoot branching control (PubMed:30865619).</text>
</comment>
<comment type="similarity">
    <text evidence="11">Belongs to the auxin efflux carrier (TC 2.A.69.1) family.</text>
</comment>
<proteinExistence type="evidence at protein level"/>
<feature type="chain" id="PRO_0000123782" description="Auxin efflux carrier component 3">
    <location>
        <begin position="1"/>
        <end position="640"/>
    </location>
</feature>
<feature type="topological domain" description="Extracellular" evidence="11">
    <location>
        <begin position="1"/>
        <end position="7"/>
    </location>
</feature>
<feature type="transmembrane region" description="Helical; Name=1" evidence="2">
    <location>
        <begin position="8"/>
        <end position="28"/>
    </location>
</feature>
<feature type="topological domain" description="Cytoplasmic" evidence="11">
    <location>
        <begin position="29"/>
        <end position="38"/>
    </location>
</feature>
<feature type="transmembrane region" description="Helical; Name=2" evidence="2">
    <location>
        <begin position="39"/>
        <end position="59"/>
    </location>
</feature>
<feature type="topological domain" description="Extracellular" evidence="11">
    <location>
        <begin position="60"/>
        <end position="71"/>
    </location>
</feature>
<feature type="transmembrane region" description="Helical; Name=3" evidence="2">
    <location>
        <begin position="72"/>
        <end position="92"/>
    </location>
</feature>
<feature type="topological domain" description="Cytoplasmic" evidence="11">
    <location>
        <begin position="93"/>
        <end position="101"/>
    </location>
</feature>
<feature type="transmembrane region" description="Helical; Name=4" evidence="2">
    <location>
        <begin position="102"/>
        <end position="122"/>
    </location>
</feature>
<feature type="topological domain" description="Extracellular" evidence="11">
    <location>
        <begin position="123"/>
        <end position="131"/>
    </location>
</feature>
<feature type="transmembrane region" description="Helical; Name=5" evidence="2">
    <location>
        <begin position="132"/>
        <end position="152"/>
    </location>
</feature>
<feature type="topological domain" description="Cytoplasmic" evidence="11">
    <location>
        <begin position="153"/>
        <end position="500"/>
    </location>
</feature>
<feature type="transmembrane region" description="Helical; Name=6" evidence="2">
    <location>
        <begin position="501"/>
        <end position="521"/>
    </location>
</feature>
<feature type="topological domain" description="Extracellular" evidence="11">
    <location>
        <begin position="522"/>
        <end position="524"/>
    </location>
</feature>
<feature type="transmembrane region" description="Helical; Name=7" evidence="2">
    <location>
        <begin position="525"/>
        <end position="545"/>
    </location>
</feature>
<feature type="topological domain" description="Cytoplasmic" evidence="11">
    <location>
        <begin position="546"/>
        <end position="559"/>
    </location>
</feature>
<feature type="transmembrane region" description="Helical; Name=8" evidence="2">
    <location>
        <begin position="560"/>
        <end position="580"/>
    </location>
</feature>
<feature type="topological domain" description="Extracellular" evidence="11">
    <location>
        <begin position="581"/>
        <end position="585"/>
    </location>
</feature>
<feature type="transmembrane region" description="Helical; Name=9" evidence="2">
    <location>
        <begin position="586"/>
        <end position="606"/>
    </location>
</feature>
<feature type="topological domain" description="Cytoplasmic" evidence="11">
    <location>
        <begin position="607"/>
        <end position="619"/>
    </location>
</feature>
<feature type="transmembrane region" description="Helical; Name=10" evidence="2">
    <location>
        <begin position="620"/>
        <end position="640"/>
    </location>
</feature>
<feature type="region of interest" description="Disordered" evidence="3">
    <location>
        <begin position="310"/>
        <end position="351"/>
    </location>
</feature>
<feature type="region of interest" description="Disordered" evidence="3">
    <location>
        <begin position="372"/>
        <end position="391"/>
    </location>
</feature>
<feature type="region of interest" description="Disordered" evidence="3">
    <location>
        <begin position="404"/>
        <end position="471"/>
    </location>
</feature>
<feature type="compositionally biased region" description="Polar residues" evidence="3">
    <location>
        <begin position="314"/>
        <end position="348"/>
    </location>
</feature>
<feature type="compositionally biased region" description="Basic and acidic residues" evidence="3">
    <location>
        <begin position="430"/>
        <end position="442"/>
    </location>
</feature>
<feature type="compositionally biased region" description="Polar residues" evidence="3">
    <location>
        <begin position="449"/>
        <end position="460"/>
    </location>
</feature>
<feature type="binding site" evidence="9 16">
    <location>
        <position position="51"/>
    </location>
    <ligand>
        <name>(indol-3-yl)acetate</name>
        <dbReference type="ChEBI" id="CHEBI:30854"/>
    </ligand>
</feature>
<feature type="binding site" evidence="9 16">
    <location>
        <position position="112"/>
    </location>
    <ligand>
        <name>(indol-3-yl)acetate</name>
        <dbReference type="ChEBI" id="CHEBI:30854"/>
    </ligand>
</feature>
<feature type="binding site" evidence="9 16">
    <location>
        <position position="114"/>
    </location>
    <ligand>
        <name>(indol-3-yl)acetate</name>
        <dbReference type="ChEBI" id="CHEBI:30854"/>
    </ligand>
</feature>
<feature type="binding site" evidence="9 16">
    <location>
        <position position="145"/>
    </location>
    <ligand>
        <name>(indol-3-yl)acetate</name>
        <dbReference type="ChEBI" id="CHEBI:30854"/>
    </ligand>
</feature>
<feature type="binding site" evidence="9 16">
    <location>
        <position position="600"/>
    </location>
    <ligand>
        <name>(indol-3-yl)acetate</name>
        <dbReference type="ChEBI" id="CHEBI:30854"/>
    </ligand>
</feature>
<feature type="binding site" evidence="9 16">
    <location>
        <position position="601"/>
    </location>
    <ligand>
        <name>(indol-3-yl)acetate</name>
        <dbReference type="ChEBI" id="CHEBI:30854"/>
    </ligand>
</feature>
<feature type="modified residue" description="Phosphoserine" evidence="1">
    <location>
        <position position="226"/>
    </location>
</feature>
<feature type="modified residue" description="Phosphoserine" evidence="1">
    <location>
        <position position="243"/>
    </location>
</feature>
<feature type="modified residue" description="Phosphoserine" evidence="1">
    <location>
        <position position="283"/>
    </location>
</feature>
<feature type="modified residue" description="Phosphothreonine" evidence="1">
    <location>
        <position position="322"/>
    </location>
</feature>
<feature type="modified residue" description="Phosphoserine" evidence="17">
    <location>
        <position position="366"/>
    </location>
</feature>
<feature type="mutagenesis site" description="Disturbed oligomerization leading to reduced auxin (IAA) transport activity; when associated with R-34; R-527 and R-528." evidence="9">
    <original>I</original>
    <variation>R</variation>
    <location>
        <position position="33"/>
    </location>
</feature>
<feature type="mutagenesis site" description="Disturbed oligomerization leading to reduced auxin (IAA) transport activity; when associated with R-33; R-527 and R-528." evidence="9">
    <original>F</original>
    <variation>R</variation>
    <location>
        <position position="34"/>
    </location>
</feature>
<feature type="mutagenesis site" description="Disturbed oligomerization leading to reduced auxin (IAA) transport activity; when associated with R-49; R-527 and R-528." evidence="9">
    <original>I</original>
    <variation>R</variation>
    <location>
        <position position="48"/>
    </location>
</feature>
<feature type="mutagenesis site" description="Disturbed oligomerization leading to reduced auxin (IAA) transport activity; when associated with R-48; R-527 and R-528." evidence="9">
    <original>F</original>
    <variation>R</variation>
    <location>
        <position position="49"/>
    </location>
</feature>
<feature type="mutagenesis site" description="Reduced auxin (e.g. IAA) efflux carrier activity." evidence="9">
    <original>V</original>
    <variation>A</variation>
    <location>
        <position position="51"/>
    </location>
</feature>
<feature type="mutagenesis site" description="Impaired auxin (e.g. IAA) efflux carrier activity." evidence="9">
    <original>L</original>
    <variation>F</variation>
    <variation>W</variation>
    <location>
        <position position="54"/>
    </location>
</feature>
<feature type="mutagenesis site" description="Reduced auxin (e.g. IAA) efflux carrier activity." evidence="9">
    <original>N</original>
    <variation>A</variation>
    <location>
        <position position="112"/>
    </location>
</feature>
<feature type="mutagenesis site" description="Strongly reduced auxin (e.g. IAA) efflux carrier activity." evidence="9">
    <original>L</original>
    <variation>A</variation>
    <location>
        <position position="114"/>
    </location>
</feature>
<feature type="mutagenesis site" description="Strongly reduced auxin (e.g. IAA) efflux carrier activity." evidence="9">
    <original>V</original>
    <variation>A</variation>
    <location>
        <position position="137"/>
    </location>
</feature>
<feature type="mutagenesis site" description="Reduced auxin (e.g. IAA) efflux carrier activity. Strongly reduced auxin (e.g. IAA) efflux carrier activity; when associated with A-145." evidence="9">
    <original>Q</original>
    <variation>A</variation>
    <location>
        <position position="140"/>
    </location>
</feature>
<feature type="mutagenesis site" description="Strongly reduced auxin (e.g. IAA) efflux carrier activity. Strongly reduced auxin (e.g. IAA) efflux carrier activity; when associated with A-140." evidence="9">
    <original>Y</original>
    <variation>A</variation>
    <location>
        <position position="145"/>
    </location>
</feature>
<feature type="mutagenesis site" description="Disturbed oligomerization leading to reduced auxin (IAA) transport activity; when associated with R-33; R-34 and R-528. Disturbed oligomerization leading to reduced auxin (IAA) transport activity; when associated with R-48; R-49 and R-528." evidence="9">
    <original>I</original>
    <variation>R</variation>
    <location>
        <position position="527"/>
    </location>
</feature>
<feature type="mutagenesis site" description="Disturbed oligomerization leading to reduced auxin (IAA) transport activity; when associated with R-33; R-34 and R-527. Disturbed oligomerization leading to reduced auxin (IAA) transport activity; when associated with R-48; R-49 and R-527." evidence="9">
    <original>L</original>
    <variation>R</variation>
    <location>
        <position position="528"/>
    </location>
</feature>
<feature type="mutagenesis site" description="Impaired auxin (e.g. IAA) efflux carrier activity." evidence="9">
    <original>L</original>
    <variation>F</variation>
    <variation>W</variation>
    <location>
        <position position="533"/>
    </location>
</feature>
<feature type="mutagenesis site" description="Abolished auxin (e.g. IAA) efflux carrier activity." evidence="9">
    <original>G</original>
    <variation>W</variation>
    <location>
        <position position="599"/>
    </location>
</feature>
<feature type="mutagenesis site" description="Reduced auxin (e.g. IAA) efflux carrier activity." evidence="9">
    <original>I</original>
    <variation>A</variation>
    <location>
        <position position="600"/>
    </location>
</feature>
<feature type="mutagenesis site" description="Strongly reduced auxin (e.g. IAA) efflux carrier activity." evidence="9">
    <original>V</original>
    <variation>A</variation>
    <location>
        <position position="601"/>
    </location>
</feature>
<feature type="helix" evidence="19">
    <location>
        <begin position="4"/>
        <end position="29"/>
    </location>
</feature>
<feature type="helix" evidence="19">
    <location>
        <begin position="36"/>
        <end position="48"/>
    </location>
</feature>
<feature type="helix" evidence="19">
    <location>
        <begin position="50"/>
        <end position="59"/>
    </location>
</feature>
<feature type="helix" evidence="20">
    <location>
        <begin position="64"/>
        <end position="66"/>
    </location>
</feature>
<feature type="helix" evidence="19">
    <location>
        <begin position="69"/>
        <end position="92"/>
    </location>
</feature>
<feature type="helix" evidence="19">
    <location>
        <begin position="98"/>
        <end position="109"/>
    </location>
</feature>
<feature type="turn" evidence="19">
    <location>
        <begin position="114"/>
        <end position="116"/>
    </location>
</feature>
<feature type="helix" evidence="19">
    <location>
        <begin position="117"/>
        <end position="125"/>
    </location>
</feature>
<feature type="helix" evidence="19">
    <location>
        <begin position="127"/>
        <end position="142"/>
    </location>
</feature>
<feature type="helix" evidence="19">
    <location>
        <begin position="144"/>
        <end position="164"/>
    </location>
</feature>
<feature type="helix" evidence="19">
    <location>
        <begin position="168"/>
        <end position="170"/>
    </location>
</feature>
<feature type="strand" evidence="19">
    <location>
        <begin position="174"/>
        <end position="177"/>
    </location>
</feature>
<feature type="strand" evidence="20">
    <location>
        <begin position="185"/>
        <end position="188"/>
    </location>
</feature>
<feature type="strand" evidence="19">
    <location>
        <begin position="190"/>
        <end position="196"/>
    </location>
</feature>
<feature type="strand" evidence="18">
    <location>
        <begin position="198"/>
        <end position="200"/>
    </location>
</feature>
<feature type="strand" evidence="19">
    <location>
        <begin position="202"/>
        <end position="208"/>
    </location>
</feature>
<feature type="helix" evidence="19">
    <location>
        <begin position="476"/>
        <end position="491"/>
    </location>
</feature>
<feature type="helix" evidence="19">
    <location>
        <begin position="495"/>
        <end position="513"/>
    </location>
</feature>
<feature type="helix" evidence="19">
    <location>
        <begin position="519"/>
        <end position="529"/>
    </location>
</feature>
<feature type="helix" evidence="19">
    <location>
        <begin position="532"/>
        <end position="546"/>
    </location>
</feature>
<feature type="strand" evidence="18">
    <location>
        <begin position="547"/>
        <end position="550"/>
    </location>
</feature>
<feature type="helix" evidence="19">
    <location>
        <begin position="555"/>
        <end position="580"/>
    </location>
</feature>
<feature type="helix" evidence="19">
    <location>
        <begin position="584"/>
        <end position="594"/>
    </location>
</feature>
<feature type="helix" evidence="19">
    <location>
        <begin position="600"/>
        <end position="609"/>
    </location>
</feature>
<feature type="helix" evidence="19">
    <location>
        <begin position="613"/>
        <end position="639"/>
    </location>
</feature>
<organism>
    <name type="scientific">Arabidopsis thaliana</name>
    <name type="common">Mouse-ear cress</name>
    <dbReference type="NCBI Taxonomy" id="3702"/>
    <lineage>
        <taxon>Eukaryota</taxon>
        <taxon>Viridiplantae</taxon>
        <taxon>Streptophyta</taxon>
        <taxon>Embryophyta</taxon>
        <taxon>Tracheophyta</taxon>
        <taxon>Spermatophyta</taxon>
        <taxon>Magnoliopsida</taxon>
        <taxon>eudicotyledons</taxon>
        <taxon>Gunneridae</taxon>
        <taxon>Pentapetalae</taxon>
        <taxon>rosids</taxon>
        <taxon>malvids</taxon>
        <taxon>Brassicales</taxon>
        <taxon>Brassicaceae</taxon>
        <taxon>Camelineae</taxon>
        <taxon>Arabidopsis</taxon>
    </lineage>
</organism>
<name>PIN3_ARATH</name>
<reference key="1">
    <citation type="journal article" date="2002" name="Nature">
        <title>Lateral relocation of auxin efflux regulator PIN3 mediates tropism in Arabidopsis.</title>
        <authorList>
            <person name="Friml J."/>
            <person name="Wisniewska J."/>
            <person name="Benkova E."/>
            <person name="Mendgen K."/>
            <person name="Palme K."/>
        </authorList>
    </citation>
    <scope>NUCLEOTIDE SEQUENCE [MRNA]</scope>
    <scope>CHARACTERIZATION</scope>
    <scope>DISRUPTION PHENOTYPE</scope>
    <source>
        <strain>cv. Columbia</strain>
    </source>
</reference>
<reference key="2">
    <citation type="journal article" date="2000" name="Nature">
        <title>Sequence and analysis of chromosome 1 of the plant Arabidopsis thaliana.</title>
        <authorList>
            <person name="Theologis A."/>
            <person name="Ecker J.R."/>
            <person name="Palm C.J."/>
            <person name="Federspiel N.A."/>
            <person name="Kaul S."/>
            <person name="White O."/>
            <person name="Alonso J."/>
            <person name="Altafi H."/>
            <person name="Araujo R."/>
            <person name="Bowman C.L."/>
            <person name="Brooks S.Y."/>
            <person name="Buehler E."/>
            <person name="Chan A."/>
            <person name="Chao Q."/>
            <person name="Chen H."/>
            <person name="Cheuk R.F."/>
            <person name="Chin C.W."/>
            <person name="Chung M.K."/>
            <person name="Conn L."/>
            <person name="Conway A.B."/>
            <person name="Conway A.R."/>
            <person name="Creasy T.H."/>
            <person name="Dewar K."/>
            <person name="Dunn P."/>
            <person name="Etgu P."/>
            <person name="Feldblyum T.V."/>
            <person name="Feng J.-D."/>
            <person name="Fong B."/>
            <person name="Fujii C.Y."/>
            <person name="Gill J.E."/>
            <person name="Goldsmith A.D."/>
            <person name="Haas B."/>
            <person name="Hansen N.F."/>
            <person name="Hughes B."/>
            <person name="Huizar L."/>
            <person name="Hunter J.L."/>
            <person name="Jenkins J."/>
            <person name="Johnson-Hopson C."/>
            <person name="Khan S."/>
            <person name="Khaykin E."/>
            <person name="Kim C.J."/>
            <person name="Koo H.L."/>
            <person name="Kremenetskaia I."/>
            <person name="Kurtz D.B."/>
            <person name="Kwan A."/>
            <person name="Lam B."/>
            <person name="Langin-Hooper S."/>
            <person name="Lee A."/>
            <person name="Lee J.M."/>
            <person name="Lenz C.A."/>
            <person name="Li J.H."/>
            <person name="Li Y.-P."/>
            <person name="Lin X."/>
            <person name="Liu S.X."/>
            <person name="Liu Z.A."/>
            <person name="Luros J.S."/>
            <person name="Maiti R."/>
            <person name="Marziali A."/>
            <person name="Militscher J."/>
            <person name="Miranda M."/>
            <person name="Nguyen M."/>
            <person name="Nierman W.C."/>
            <person name="Osborne B.I."/>
            <person name="Pai G."/>
            <person name="Peterson J."/>
            <person name="Pham P.K."/>
            <person name="Rizzo M."/>
            <person name="Rooney T."/>
            <person name="Rowley D."/>
            <person name="Sakano H."/>
            <person name="Salzberg S.L."/>
            <person name="Schwartz J.R."/>
            <person name="Shinn P."/>
            <person name="Southwick A.M."/>
            <person name="Sun H."/>
            <person name="Tallon L.J."/>
            <person name="Tambunga G."/>
            <person name="Toriumi M.J."/>
            <person name="Town C.D."/>
            <person name="Utterback T."/>
            <person name="Van Aken S."/>
            <person name="Vaysberg M."/>
            <person name="Vysotskaia V.S."/>
            <person name="Walker M."/>
            <person name="Wu D."/>
            <person name="Yu G."/>
            <person name="Fraser C.M."/>
            <person name="Venter J.C."/>
            <person name="Davis R.W."/>
        </authorList>
    </citation>
    <scope>NUCLEOTIDE SEQUENCE [LARGE SCALE GENOMIC DNA]</scope>
    <source>
        <strain>cv. Columbia</strain>
    </source>
</reference>
<reference key="3">
    <citation type="journal article" date="2017" name="Plant J.">
        <title>Araport11: a complete reannotation of the Arabidopsis thaliana reference genome.</title>
        <authorList>
            <person name="Cheng C.Y."/>
            <person name="Krishnakumar V."/>
            <person name="Chan A.P."/>
            <person name="Thibaud-Nissen F."/>
            <person name="Schobel S."/>
            <person name="Town C.D."/>
        </authorList>
    </citation>
    <scope>GENOME REANNOTATION</scope>
    <source>
        <strain>cv. Columbia</strain>
    </source>
</reference>
<reference key="4">
    <citation type="journal article" date="2003" name="Science">
        <title>Empirical analysis of transcriptional activity in the Arabidopsis genome.</title>
        <authorList>
            <person name="Yamada K."/>
            <person name="Lim J."/>
            <person name="Dale J.M."/>
            <person name="Chen H."/>
            <person name="Shinn P."/>
            <person name="Palm C.J."/>
            <person name="Southwick A.M."/>
            <person name="Wu H.C."/>
            <person name="Kim C.J."/>
            <person name="Nguyen M."/>
            <person name="Pham P.K."/>
            <person name="Cheuk R.F."/>
            <person name="Karlin-Newmann G."/>
            <person name="Liu S.X."/>
            <person name="Lam B."/>
            <person name="Sakano H."/>
            <person name="Wu T."/>
            <person name="Yu G."/>
            <person name="Miranda M."/>
            <person name="Quach H.L."/>
            <person name="Tripp M."/>
            <person name="Chang C.H."/>
            <person name="Lee J.M."/>
            <person name="Toriumi M.J."/>
            <person name="Chan M.M."/>
            <person name="Tang C.C."/>
            <person name="Onodera C.S."/>
            <person name="Deng J.M."/>
            <person name="Akiyama K."/>
            <person name="Ansari Y."/>
            <person name="Arakawa T."/>
            <person name="Banh J."/>
            <person name="Banno F."/>
            <person name="Bowser L."/>
            <person name="Brooks S.Y."/>
            <person name="Carninci P."/>
            <person name="Chao Q."/>
            <person name="Choy N."/>
            <person name="Enju A."/>
            <person name="Goldsmith A.D."/>
            <person name="Gurjal M."/>
            <person name="Hansen N.F."/>
            <person name="Hayashizaki Y."/>
            <person name="Johnson-Hopson C."/>
            <person name="Hsuan V.W."/>
            <person name="Iida K."/>
            <person name="Karnes M."/>
            <person name="Khan S."/>
            <person name="Koesema E."/>
            <person name="Ishida J."/>
            <person name="Jiang P.X."/>
            <person name="Jones T."/>
            <person name="Kawai J."/>
            <person name="Kamiya A."/>
            <person name="Meyers C."/>
            <person name="Nakajima M."/>
            <person name="Narusaka M."/>
            <person name="Seki M."/>
            <person name="Sakurai T."/>
            <person name="Satou M."/>
            <person name="Tamse R."/>
            <person name="Vaysberg M."/>
            <person name="Wallender E.K."/>
            <person name="Wong C."/>
            <person name="Yamamura Y."/>
            <person name="Yuan S."/>
            <person name="Shinozaki K."/>
            <person name="Davis R.W."/>
            <person name="Theologis A."/>
            <person name="Ecker J.R."/>
        </authorList>
    </citation>
    <scope>NUCLEOTIDE SEQUENCE [LARGE SCALE MRNA]</scope>
    <source>
        <strain>cv. Columbia</strain>
    </source>
</reference>
<reference key="5">
    <citation type="journal article" date="2003" name="Nature">
        <title>Efflux-dependent auxin gradients establish the apical-basal axis of Arabidopsis.</title>
        <authorList>
            <person name="Friml J."/>
            <person name="Vieten A."/>
            <person name="Sauer M."/>
            <person name="Weijers D."/>
            <person name="Schwarz H."/>
            <person name="Hamann T."/>
            <person name="Offringa R."/>
            <person name="Juergens G."/>
        </authorList>
    </citation>
    <scope>DEVELOPMENTAL STAGE</scope>
</reference>
<reference key="6">
    <citation type="journal article" date="2005" name="Trends Plant Sci.">
        <title>The PIN auxin efflux facilitators: evolutionary and functional perspectives.</title>
        <authorList>
            <person name="Paponov I.A."/>
            <person name="Teale W.D."/>
            <person name="Trebar M."/>
            <person name="Blilou I."/>
            <person name="Palme K."/>
        </authorList>
    </citation>
    <scope>GENE FAMILY</scope>
    <scope>NOMENCLATURE</scope>
</reference>
<reference key="7">
    <citation type="journal article" date="2009" name="Plant Physiol.">
        <title>Large-scale Arabidopsis phosphoproteome profiling reveals novel chloroplast kinase substrates and phosphorylation networks.</title>
        <authorList>
            <person name="Reiland S."/>
            <person name="Messerli G."/>
            <person name="Baerenfaller K."/>
            <person name="Gerrits B."/>
            <person name="Endler A."/>
            <person name="Grossmann J."/>
            <person name="Gruissem W."/>
            <person name="Baginsky S."/>
        </authorList>
    </citation>
    <scope>PHOSPHORYLATION [LARGE SCALE ANALYSIS] AT SER-366</scope>
    <scope>IDENTIFICATION BY MASS SPECTROMETRY [LARGE SCALE ANALYSIS]</scope>
</reference>
<reference key="8">
    <citation type="journal article" date="2010" name="Plant Physiol.">
        <title>Differential auxin-transporting activities of PIN-FORMED proteins in Arabidopsis root hair cells.</title>
        <authorList>
            <person name="Ganguly A."/>
            <person name="Lee S.H."/>
            <person name="Cho M."/>
            <person name="Lee O.R."/>
            <person name="Yoo H."/>
            <person name="Cho H.T."/>
        </authorList>
    </citation>
    <scope>SUBCELLULAR LOCATION</scope>
    <scope>FUNCTION</scope>
</reference>
<reference key="9">
    <citation type="journal article" date="2014" name="Plant J.">
        <title>Inter-regulation of the unfolded protein response and auxin signaling.</title>
        <authorList>
            <person name="Chen Y."/>
            <person name="Aung K."/>
            <person name="Rolcik J."/>
            <person name="Walicki K."/>
            <person name="Friml J."/>
            <person name="Brandizzi F."/>
        </authorList>
    </citation>
    <scope>INDUCTION</scope>
</reference>
<reference key="10">
    <citation type="journal article" date="2019" name="PLoS Genet.">
        <title>Connective auxin transport contributes to strigolactone-mediated shoot branching control independent of the transcription factor BRC1.</title>
        <authorList>
            <person name="van Rongen M."/>
            <person name="Bennett T."/>
            <person name="Ticchiarelli F."/>
            <person name="Leyser O."/>
        </authorList>
    </citation>
    <scope>FUNCTION</scope>
    <scope>DISRUPTION PHENOTYPE</scope>
    <source>
        <strain>cv. Columbia</strain>
    </source>
</reference>
<reference evidence="14 15 16" key="11">
    <citation type="journal article" date="2022" name="Nature">
        <title>Structures and mechanisms of the Arabidopsis auxin transporter PIN3.</title>
        <authorList>
            <person name="Su N."/>
            <person name="Zhu A."/>
            <person name="Tao X."/>
            <person name="Ding Z.J."/>
            <person name="Chang S."/>
            <person name="Ye F."/>
            <person name="Zhang Y."/>
            <person name="Zhao C."/>
            <person name="Chen Q."/>
            <person name="Wang J."/>
            <person name="Zhou C.Y."/>
            <person name="Guo Y."/>
            <person name="Jiao S."/>
            <person name="Zhang S."/>
            <person name="Wen H."/>
            <person name="Ma L."/>
            <person name="Ye S."/>
            <person name="Zheng S.J."/>
            <person name="Yang F."/>
            <person name="Wu S."/>
            <person name="Guo J."/>
        </authorList>
    </citation>
    <scope>STRUCTURE BY ELECTRON MICROSCOPY (2.62 ANGSTROMS) IN COMPLEX WITH AUXIN AND AUXIN TRANSPORT INHIBITOR</scope>
    <scope>FUNCTION</scope>
    <scope>MUTAGENESIS OF ILE-33; PHE-34; ILE-48; PHE-49; VAL-51; LEU-54; ASN-112; LEU-114; VAL-137; GLN-140; TYR-145; ILE-527; LEU-528; LEU-533; GLY-599; ILE-600 AND VAL-601</scope>
    <scope>HOMODIMERIZATION</scope>
    <scope>ACTIVITY REGULATION</scope>
</reference>
<protein>
    <recommendedName>
        <fullName evidence="10">Auxin efflux carrier component 3</fullName>
        <shortName evidence="10">AtPIN3</shortName>
    </recommendedName>
</protein>